<proteinExistence type="inferred from homology"/>
<organism>
    <name type="scientific">Bacillus thuringiensis subsp. konkukian (strain 97-27)</name>
    <dbReference type="NCBI Taxonomy" id="281309"/>
    <lineage>
        <taxon>Bacteria</taxon>
        <taxon>Bacillati</taxon>
        <taxon>Bacillota</taxon>
        <taxon>Bacilli</taxon>
        <taxon>Bacillales</taxon>
        <taxon>Bacillaceae</taxon>
        <taxon>Bacillus</taxon>
        <taxon>Bacillus cereus group</taxon>
    </lineage>
</organism>
<feature type="chain" id="PRO_1000067056" description="Formamidase">
    <location>
        <begin position="1"/>
        <end position="332"/>
    </location>
</feature>
<feature type="domain" description="CN hydrolase" evidence="2">
    <location>
        <begin position="14"/>
        <end position="259"/>
    </location>
</feature>
<feature type="active site" description="Proton acceptor" evidence="1">
    <location>
        <position position="60"/>
    </location>
</feature>
<feature type="active site" description="Proton donor" evidence="1">
    <location>
        <position position="132"/>
    </location>
</feature>
<feature type="active site" description="Nucleophile" evidence="1">
    <location>
        <position position="165"/>
    </location>
</feature>
<accession>Q6HEM5</accession>
<dbReference type="EC" id="3.5.1.49" evidence="1"/>
<dbReference type="EMBL" id="AE017355">
    <property type="protein sequence ID" value="AAT60659.1"/>
    <property type="molecule type" value="Genomic_DNA"/>
</dbReference>
<dbReference type="RefSeq" id="WP_000535791.1">
    <property type="nucleotide sequence ID" value="NC_005957.1"/>
</dbReference>
<dbReference type="RefSeq" id="YP_038001.1">
    <property type="nucleotide sequence ID" value="NC_005957.1"/>
</dbReference>
<dbReference type="SMR" id="Q6HEM5"/>
<dbReference type="KEGG" id="btk:BT9727_3682"/>
<dbReference type="PATRIC" id="fig|281309.8.peg.3920"/>
<dbReference type="HOGENOM" id="CLU_071797_0_0_9"/>
<dbReference type="Proteomes" id="UP000001301">
    <property type="component" value="Chromosome"/>
</dbReference>
<dbReference type="GO" id="GO:0004328">
    <property type="term" value="F:formamidase activity"/>
    <property type="evidence" value="ECO:0007669"/>
    <property type="project" value="UniProtKB-UniRule"/>
</dbReference>
<dbReference type="GO" id="GO:0050126">
    <property type="term" value="F:N-carbamoylputrescine amidase activity"/>
    <property type="evidence" value="ECO:0007669"/>
    <property type="project" value="TreeGrafter"/>
</dbReference>
<dbReference type="GO" id="GO:0033388">
    <property type="term" value="P:putrescine biosynthetic process from arginine"/>
    <property type="evidence" value="ECO:0007669"/>
    <property type="project" value="TreeGrafter"/>
</dbReference>
<dbReference type="CDD" id="cd07565">
    <property type="entry name" value="aliphatic_amidase"/>
    <property type="match status" value="1"/>
</dbReference>
<dbReference type="Gene3D" id="3.60.110.10">
    <property type="entry name" value="Carbon-nitrogen hydrolase"/>
    <property type="match status" value="1"/>
</dbReference>
<dbReference type="HAMAP" id="MF_01243">
    <property type="entry name" value="Formamidase"/>
    <property type="match status" value="1"/>
</dbReference>
<dbReference type="InterPro" id="IPR050345">
    <property type="entry name" value="Aliph_Amidase/BUP"/>
</dbReference>
<dbReference type="InterPro" id="IPR003010">
    <property type="entry name" value="C-N_Hydrolase"/>
</dbReference>
<dbReference type="InterPro" id="IPR036526">
    <property type="entry name" value="C-N_Hydrolase_sf"/>
</dbReference>
<dbReference type="InterPro" id="IPR022843">
    <property type="entry name" value="Formamidase"/>
</dbReference>
<dbReference type="NCBIfam" id="NF009803">
    <property type="entry name" value="PRK13287.1"/>
    <property type="match status" value="1"/>
</dbReference>
<dbReference type="PANTHER" id="PTHR43674:SF15">
    <property type="entry name" value="FORMAMIDASE"/>
    <property type="match status" value="1"/>
</dbReference>
<dbReference type="PANTHER" id="PTHR43674">
    <property type="entry name" value="NITRILASE C965.09-RELATED"/>
    <property type="match status" value="1"/>
</dbReference>
<dbReference type="Pfam" id="PF00795">
    <property type="entry name" value="CN_hydrolase"/>
    <property type="match status" value="1"/>
</dbReference>
<dbReference type="SUPFAM" id="SSF56317">
    <property type="entry name" value="Carbon-nitrogen hydrolase"/>
    <property type="match status" value="1"/>
</dbReference>
<dbReference type="PROSITE" id="PS50263">
    <property type="entry name" value="CN_HYDROLASE"/>
    <property type="match status" value="1"/>
</dbReference>
<name>AMIF_BACHK</name>
<gene>
    <name evidence="1" type="primary">amiF</name>
    <name type="ordered locus">BT9727_3682</name>
</gene>
<sequence length="332" mass="36808">MGSSGSMVKPISGFLTALIQYPVPVVESRADIDKQIKQIIKTIHSTKAGYPGLELIVFPEYSTQGLNTKKWTTEEFLCTVPGPETDLFAEACKESEVYGVFSIMERNPDGGEPYNTAIIIDPQGEMILKYRKLNPWVPVEPWKAGDLGLPVCDGPGGSKLAVCICHDGMFPEVAREAAYKGANVLIRISGYSTQVSEQWMLTNRSNAWQNLMYTLSVNLAGYDGVFYYFGEGQVCNFDGTTLVQGHRNPWEIVTAEVYPELADQARLGWGLENNIYNLGSRGYVATPGGVKENPYTFVKDLAEGKYKVPWEDEIKVKDGTIYGYPVKKTIHS</sequence>
<reference key="1">
    <citation type="journal article" date="2006" name="J. Bacteriol.">
        <title>Pathogenomic sequence analysis of Bacillus cereus and Bacillus thuringiensis isolates closely related to Bacillus anthracis.</title>
        <authorList>
            <person name="Han C.S."/>
            <person name="Xie G."/>
            <person name="Challacombe J.F."/>
            <person name="Altherr M.R."/>
            <person name="Bhotika S.S."/>
            <person name="Bruce D."/>
            <person name="Campbell C.S."/>
            <person name="Campbell M.L."/>
            <person name="Chen J."/>
            <person name="Chertkov O."/>
            <person name="Cleland C."/>
            <person name="Dimitrijevic M."/>
            <person name="Doggett N.A."/>
            <person name="Fawcett J.J."/>
            <person name="Glavina T."/>
            <person name="Goodwin L.A."/>
            <person name="Hill K.K."/>
            <person name="Hitchcock P."/>
            <person name="Jackson P.J."/>
            <person name="Keim P."/>
            <person name="Kewalramani A.R."/>
            <person name="Longmire J."/>
            <person name="Lucas S."/>
            <person name="Malfatti S."/>
            <person name="McMurry K."/>
            <person name="Meincke L.J."/>
            <person name="Misra M."/>
            <person name="Moseman B.L."/>
            <person name="Mundt M."/>
            <person name="Munk A.C."/>
            <person name="Okinaka R.T."/>
            <person name="Parson-Quintana B."/>
            <person name="Reilly L.P."/>
            <person name="Richardson P."/>
            <person name="Robinson D.L."/>
            <person name="Rubin E."/>
            <person name="Saunders E."/>
            <person name="Tapia R."/>
            <person name="Tesmer J.G."/>
            <person name="Thayer N."/>
            <person name="Thompson L.S."/>
            <person name="Tice H."/>
            <person name="Ticknor L.O."/>
            <person name="Wills P.L."/>
            <person name="Brettin T.S."/>
            <person name="Gilna P."/>
        </authorList>
    </citation>
    <scope>NUCLEOTIDE SEQUENCE [LARGE SCALE GENOMIC DNA]</scope>
    <source>
        <strain>97-27</strain>
    </source>
</reference>
<protein>
    <recommendedName>
        <fullName evidence="1">Formamidase</fullName>
        <ecNumber evidence="1">3.5.1.49</ecNumber>
    </recommendedName>
    <alternativeName>
        <fullName evidence="1">Formamide amidohydrolase</fullName>
    </alternativeName>
</protein>
<comment type="function">
    <text evidence="1">Is an aliphatic amidase with a restricted substrate specificity, as it only hydrolyzes formamide.</text>
</comment>
<comment type="catalytic activity">
    <reaction evidence="1">
        <text>formamide + H2O = formate + NH4(+)</text>
        <dbReference type="Rhea" id="RHEA:21948"/>
        <dbReference type="ChEBI" id="CHEBI:15377"/>
        <dbReference type="ChEBI" id="CHEBI:15740"/>
        <dbReference type="ChEBI" id="CHEBI:16397"/>
        <dbReference type="ChEBI" id="CHEBI:28938"/>
        <dbReference type="EC" id="3.5.1.49"/>
    </reaction>
</comment>
<comment type="similarity">
    <text evidence="1">Belongs to the carbon-nitrogen hydrolase superfamily. Aliphatic amidase family.</text>
</comment>
<keyword id="KW-0378">Hydrolase</keyword>
<evidence type="ECO:0000255" key="1">
    <source>
        <dbReference type="HAMAP-Rule" id="MF_01243"/>
    </source>
</evidence>
<evidence type="ECO:0000255" key="2">
    <source>
        <dbReference type="PROSITE-ProRule" id="PRU00054"/>
    </source>
</evidence>